<feature type="transit peptide" description="Mitochondrion" evidence="2">
    <location>
        <begin position="1"/>
        <end position="19"/>
    </location>
</feature>
<feature type="chain" id="PRO_0000273064" description="Small ribosomal subunit protein uS7m">
    <location>
        <begin position="20"/>
        <end position="218"/>
    </location>
</feature>
<accession>Q9VKX4</accession>
<protein>
    <recommendedName>
        <fullName evidence="3">Small ribosomal subunit protein uS7m</fullName>
    </recommendedName>
    <alternativeName>
        <fullName>28S ribosomal protein S7, mitochondrial</fullName>
        <shortName>MRP-S7</shortName>
        <shortName>S7mt</shortName>
    </alternativeName>
</protein>
<comment type="subunit">
    <text evidence="1">Component of the mitochondrial ribosome small subunit (28S) which comprises a 12S rRNA and about 30 distinct proteins.</text>
</comment>
<comment type="subcellular location">
    <subcellularLocation>
        <location evidence="1">Mitochondrion</location>
    </subcellularLocation>
</comment>
<comment type="similarity">
    <text evidence="3">Belongs to the universal ribosomal protein uS7 family.</text>
</comment>
<keyword id="KW-0496">Mitochondrion</keyword>
<keyword id="KW-1185">Reference proteome</keyword>
<keyword id="KW-0687">Ribonucleoprotein</keyword>
<keyword id="KW-0689">Ribosomal protein</keyword>
<keyword id="KW-0809">Transit peptide</keyword>
<evidence type="ECO:0000250" key="1">
    <source>
        <dbReference type="UniProtKB" id="Q3T040"/>
    </source>
</evidence>
<evidence type="ECO:0000255" key="2"/>
<evidence type="ECO:0000305" key="3"/>
<dbReference type="EMBL" id="AE014134">
    <property type="protein sequence ID" value="AAF52933.1"/>
    <property type="molecule type" value="Genomic_DNA"/>
</dbReference>
<dbReference type="EMBL" id="AY075413">
    <property type="protein sequence ID" value="AAL68236.1"/>
    <property type="molecule type" value="mRNA"/>
</dbReference>
<dbReference type="RefSeq" id="NP_001260339.1">
    <property type="nucleotide sequence ID" value="NM_001273410.1"/>
</dbReference>
<dbReference type="RefSeq" id="NP_523537.1">
    <property type="nucleotide sequence ID" value="NM_078813.3"/>
</dbReference>
<dbReference type="SMR" id="Q9VKX4"/>
<dbReference type="BioGRID" id="60496">
    <property type="interactions" value="3"/>
</dbReference>
<dbReference type="FunCoup" id="Q9VKX4">
    <property type="interactions" value="637"/>
</dbReference>
<dbReference type="IntAct" id="Q9VKX4">
    <property type="interactions" value="36"/>
</dbReference>
<dbReference type="STRING" id="7227.FBpp0304503"/>
<dbReference type="PaxDb" id="7227-FBpp0304503"/>
<dbReference type="DNASU" id="34412"/>
<dbReference type="EnsemblMetazoa" id="FBtr0080007">
    <property type="protein sequence ID" value="FBpp0079597"/>
    <property type="gene ID" value="FBgn0032236"/>
</dbReference>
<dbReference type="EnsemblMetazoa" id="FBtr0332194">
    <property type="protein sequence ID" value="FBpp0304503"/>
    <property type="gene ID" value="FBgn0032236"/>
</dbReference>
<dbReference type="GeneID" id="34412"/>
<dbReference type="KEGG" id="dme:Dmel_CG5108"/>
<dbReference type="AGR" id="FB:FBgn0032236"/>
<dbReference type="CTD" id="51081"/>
<dbReference type="FlyBase" id="FBgn0032236">
    <property type="gene designation" value="mRpS7"/>
</dbReference>
<dbReference type="VEuPathDB" id="VectorBase:FBgn0032236"/>
<dbReference type="eggNOG" id="KOG3291">
    <property type="taxonomic scope" value="Eukaryota"/>
</dbReference>
<dbReference type="GeneTree" id="ENSGT00390000014620"/>
<dbReference type="HOGENOM" id="CLU_072226_0_1_1"/>
<dbReference type="InParanoid" id="Q9VKX4"/>
<dbReference type="OMA" id="DDTHRMA"/>
<dbReference type="OrthoDB" id="9972728at2759"/>
<dbReference type="PhylomeDB" id="Q9VKX4"/>
<dbReference type="Reactome" id="R-DME-5389840">
    <property type="pathway name" value="Mitochondrial translation elongation"/>
</dbReference>
<dbReference type="Reactome" id="R-DME-5419276">
    <property type="pathway name" value="Mitochondrial translation termination"/>
</dbReference>
<dbReference type="SignaLink" id="Q9VKX4"/>
<dbReference type="BioGRID-ORCS" id="34412">
    <property type="hits" value="0 hits in 1 CRISPR screen"/>
</dbReference>
<dbReference type="GenomeRNAi" id="34412"/>
<dbReference type="PRO" id="PR:Q9VKX4"/>
<dbReference type="Proteomes" id="UP000000803">
    <property type="component" value="Chromosome 2L"/>
</dbReference>
<dbReference type="Bgee" id="FBgn0032236">
    <property type="expression patterns" value="Expressed in adult Malpighian tubule (Drosophila) and 179 other cell types or tissues"/>
</dbReference>
<dbReference type="ExpressionAtlas" id="Q9VKX4">
    <property type="expression patterns" value="baseline and differential"/>
</dbReference>
<dbReference type="GO" id="GO:0005763">
    <property type="term" value="C:mitochondrial small ribosomal subunit"/>
    <property type="evidence" value="ECO:0000250"/>
    <property type="project" value="UniProtKB"/>
</dbReference>
<dbReference type="GO" id="GO:0005840">
    <property type="term" value="C:ribosome"/>
    <property type="evidence" value="ECO:0000318"/>
    <property type="project" value="GO_Central"/>
</dbReference>
<dbReference type="GO" id="GO:0003729">
    <property type="term" value="F:mRNA binding"/>
    <property type="evidence" value="ECO:0000318"/>
    <property type="project" value="GO_Central"/>
</dbReference>
<dbReference type="GO" id="GO:0019843">
    <property type="term" value="F:rRNA binding"/>
    <property type="evidence" value="ECO:0000318"/>
    <property type="project" value="GO_Central"/>
</dbReference>
<dbReference type="GO" id="GO:0003735">
    <property type="term" value="F:structural constituent of ribosome"/>
    <property type="evidence" value="ECO:0000250"/>
    <property type="project" value="UniProtKB"/>
</dbReference>
<dbReference type="GO" id="GO:0032543">
    <property type="term" value="P:mitochondrial translation"/>
    <property type="evidence" value="ECO:0000250"/>
    <property type="project" value="UniProtKB"/>
</dbReference>
<dbReference type="GO" id="GO:0000028">
    <property type="term" value="P:ribosomal small subunit assembly"/>
    <property type="evidence" value="ECO:0000318"/>
    <property type="project" value="GO_Central"/>
</dbReference>
<dbReference type="GO" id="GO:0006412">
    <property type="term" value="P:translation"/>
    <property type="evidence" value="ECO:0000318"/>
    <property type="project" value="GO_Central"/>
</dbReference>
<dbReference type="CDD" id="cd14870">
    <property type="entry name" value="uS7_Mitochondria_Mammalian"/>
    <property type="match status" value="1"/>
</dbReference>
<dbReference type="FunFam" id="1.10.455.10:FF:000015">
    <property type="entry name" value="Uncharacterized protein, isoform B"/>
    <property type="match status" value="1"/>
</dbReference>
<dbReference type="Gene3D" id="1.10.455.10">
    <property type="entry name" value="Ribosomal protein S7 domain"/>
    <property type="match status" value="1"/>
</dbReference>
<dbReference type="InterPro" id="IPR000235">
    <property type="entry name" value="Ribosomal_uS7"/>
</dbReference>
<dbReference type="InterPro" id="IPR023798">
    <property type="entry name" value="Ribosomal_uS7_dom"/>
</dbReference>
<dbReference type="InterPro" id="IPR036823">
    <property type="entry name" value="Ribosomal_uS7_dom_sf"/>
</dbReference>
<dbReference type="PANTHER" id="PTHR11205">
    <property type="entry name" value="RIBOSOMAL PROTEIN S7"/>
    <property type="match status" value="1"/>
</dbReference>
<dbReference type="Pfam" id="PF00177">
    <property type="entry name" value="Ribosomal_S7"/>
    <property type="match status" value="1"/>
</dbReference>
<dbReference type="PIRSF" id="PIRSF002122">
    <property type="entry name" value="RPS7p_RPS7a_RPS5e_RPS7o"/>
    <property type="match status" value="1"/>
</dbReference>
<dbReference type="SUPFAM" id="SSF47973">
    <property type="entry name" value="Ribosomal protein S7"/>
    <property type="match status" value="1"/>
</dbReference>
<gene>
    <name type="primary">mRpS7</name>
    <name type="ORF">CG5108</name>
</gene>
<name>RT07_DROME</name>
<organism>
    <name type="scientific">Drosophila melanogaster</name>
    <name type="common">Fruit fly</name>
    <dbReference type="NCBI Taxonomy" id="7227"/>
    <lineage>
        <taxon>Eukaryota</taxon>
        <taxon>Metazoa</taxon>
        <taxon>Ecdysozoa</taxon>
        <taxon>Arthropoda</taxon>
        <taxon>Hexapoda</taxon>
        <taxon>Insecta</taxon>
        <taxon>Pterygota</taxon>
        <taxon>Neoptera</taxon>
        <taxon>Endopterygota</taxon>
        <taxon>Diptera</taxon>
        <taxon>Brachycera</taxon>
        <taxon>Muscomorpha</taxon>
        <taxon>Ephydroidea</taxon>
        <taxon>Drosophilidae</taxon>
        <taxon>Drosophila</taxon>
        <taxon>Sophophora</taxon>
    </lineage>
</organism>
<proteinExistence type="evidence at transcript level"/>
<reference key="1">
    <citation type="journal article" date="2000" name="Science">
        <title>The genome sequence of Drosophila melanogaster.</title>
        <authorList>
            <person name="Adams M.D."/>
            <person name="Celniker S.E."/>
            <person name="Holt R.A."/>
            <person name="Evans C.A."/>
            <person name="Gocayne J.D."/>
            <person name="Amanatides P.G."/>
            <person name="Scherer S.E."/>
            <person name="Li P.W."/>
            <person name="Hoskins R.A."/>
            <person name="Galle R.F."/>
            <person name="George R.A."/>
            <person name="Lewis S.E."/>
            <person name="Richards S."/>
            <person name="Ashburner M."/>
            <person name="Henderson S.N."/>
            <person name="Sutton G.G."/>
            <person name="Wortman J.R."/>
            <person name="Yandell M.D."/>
            <person name="Zhang Q."/>
            <person name="Chen L.X."/>
            <person name="Brandon R.C."/>
            <person name="Rogers Y.-H.C."/>
            <person name="Blazej R.G."/>
            <person name="Champe M."/>
            <person name="Pfeiffer B.D."/>
            <person name="Wan K.H."/>
            <person name="Doyle C."/>
            <person name="Baxter E.G."/>
            <person name="Helt G."/>
            <person name="Nelson C.R."/>
            <person name="Miklos G.L.G."/>
            <person name="Abril J.F."/>
            <person name="Agbayani A."/>
            <person name="An H.-J."/>
            <person name="Andrews-Pfannkoch C."/>
            <person name="Baldwin D."/>
            <person name="Ballew R.M."/>
            <person name="Basu A."/>
            <person name="Baxendale J."/>
            <person name="Bayraktaroglu L."/>
            <person name="Beasley E.M."/>
            <person name="Beeson K.Y."/>
            <person name="Benos P.V."/>
            <person name="Berman B.P."/>
            <person name="Bhandari D."/>
            <person name="Bolshakov S."/>
            <person name="Borkova D."/>
            <person name="Botchan M.R."/>
            <person name="Bouck J."/>
            <person name="Brokstein P."/>
            <person name="Brottier P."/>
            <person name="Burtis K.C."/>
            <person name="Busam D.A."/>
            <person name="Butler H."/>
            <person name="Cadieu E."/>
            <person name="Center A."/>
            <person name="Chandra I."/>
            <person name="Cherry J.M."/>
            <person name="Cawley S."/>
            <person name="Dahlke C."/>
            <person name="Davenport L.B."/>
            <person name="Davies P."/>
            <person name="de Pablos B."/>
            <person name="Delcher A."/>
            <person name="Deng Z."/>
            <person name="Mays A.D."/>
            <person name="Dew I."/>
            <person name="Dietz S.M."/>
            <person name="Dodson K."/>
            <person name="Doup L.E."/>
            <person name="Downes M."/>
            <person name="Dugan-Rocha S."/>
            <person name="Dunkov B.C."/>
            <person name="Dunn P."/>
            <person name="Durbin K.J."/>
            <person name="Evangelista C.C."/>
            <person name="Ferraz C."/>
            <person name="Ferriera S."/>
            <person name="Fleischmann W."/>
            <person name="Fosler C."/>
            <person name="Gabrielian A.E."/>
            <person name="Garg N.S."/>
            <person name="Gelbart W.M."/>
            <person name="Glasser K."/>
            <person name="Glodek A."/>
            <person name="Gong F."/>
            <person name="Gorrell J.H."/>
            <person name="Gu Z."/>
            <person name="Guan P."/>
            <person name="Harris M."/>
            <person name="Harris N.L."/>
            <person name="Harvey D.A."/>
            <person name="Heiman T.J."/>
            <person name="Hernandez J.R."/>
            <person name="Houck J."/>
            <person name="Hostin D."/>
            <person name="Houston K.A."/>
            <person name="Howland T.J."/>
            <person name="Wei M.-H."/>
            <person name="Ibegwam C."/>
            <person name="Jalali M."/>
            <person name="Kalush F."/>
            <person name="Karpen G.H."/>
            <person name="Ke Z."/>
            <person name="Kennison J.A."/>
            <person name="Ketchum K.A."/>
            <person name="Kimmel B.E."/>
            <person name="Kodira C.D."/>
            <person name="Kraft C.L."/>
            <person name="Kravitz S."/>
            <person name="Kulp D."/>
            <person name="Lai Z."/>
            <person name="Lasko P."/>
            <person name="Lei Y."/>
            <person name="Levitsky A.A."/>
            <person name="Li J.H."/>
            <person name="Li Z."/>
            <person name="Liang Y."/>
            <person name="Lin X."/>
            <person name="Liu X."/>
            <person name="Mattei B."/>
            <person name="McIntosh T.C."/>
            <person name="McLeod M.P."/>
            <person name="McPherson D."/>
            <person name="Merkulov G."/>
            <person name="Milshina N.V."/>
            <person name="Mobarry C."/>
            <person name="Morris J."/>
            <person name="Moshrefi A."/>
            <person name="Mount S.M."/>
            <person name="Moy M."/>
            <person name="Murphy B."/>
            <person name="Murphy L."/>
            <person name="Muzny D.M."/>
            <person name="Nelson D.L."/>
            <person name="Nelson D.R."/>
            <person name="Nelson K.A."/>
            <person name="Nixon K."/>
            <person name="Nusskern D.R."/>
            <person name="Pacleb J.M."/>
            <person name="Palazzolo M."/>
            <person name="Pittman G.S."/>
            <person name="Pan S."/>
            <person name="Pollard J."/>
            <person name="Puri V."/>
            <person name="Reese M.G."/>
            <person name="Reinert K."/>
            <person name="Remington K."/>
            <person name="Saunders R.D.C."/>
            <person name="Scheeler F."/>
            <person name="Shen H."/>
            <person name="Shue B.C."/>
            <person name="Siden-Kiamos I."/>
            <person name="Simpson M."/>
            <person name="Skupski M.P."/>
            <person name="Smith T.J."/>
            <person name="Spier E."/>
            <person name="Spradling A.C."/>
            <person name="Stapleton M."/>
            <person name="Strong R."/>
            <person name="Sun E."/>
            <person name="Svirskas R."/>
            <person name="Tector C."/>
            <person name="Turner R."/>
            <person name="Venter E."/>
            <person name="Wang A.H."/>
            <person name="Wang X."/>
            <person name="Wang Z.-Y."/>
            <person name="Wassarman D.A."/>
            <person name="Weinstock G.M."/>
            <person name="Weissenbach J."/>
            <person name="Williams S.M."/>
            <person name="Woodage T."/>
            <person name="Worley K.C."/>
            <person name="Wu D."/>
            <person name="Yang S."/>
            <person name="Yao Q.A."/>
            <person name="Ye J."/>
            <person name="Yeh R.-F."/>
            <person name="Zaveri J.S."/>
            <person name="Zhan M."/>
            <person name="Zhang G."/>
            <person name="Zhao Q."/>
            <person name="Zheng L."/>
            <person name="Zheng X.H."/>
            <person name="Zhong F.N."/>
            <person name="Zhong W."/>
            <person name="Zhou X."/>
            <person name="Zhu S.C."/>
            <person name="Zhu X."/>
            <person name="Smith H.O."/>
            <person name="Gibbs R.A."/>
            <person name="Myers E.W."/>
            <person name="Rubin G.M."/>
            <person name="Venter J.C."/>
        </authorList>
    </citation>
    <scope>NUCLEOTIDE SEQUENCE [LARGE SCALE GENOMIC DNA]</scope>
    <source>
        <strain>Berkeley</strain>
    </source>
</reference>
<reference key="2">
    <citation type="journal article" date="2002" name="Genome Biol.">
        <title>Annotation of the Drosophila melanogaster euchromatic genome: a systematic review.</title>
        <authorList>
            <person name="Misra S."/>
            <person name="Crosby M.A."/>
            <person name="Mungall C.J."/>
            <person name="Matthews B.B."/>
            <person name="Campbell K.S."/>
            <person name="Hradecky P."/>
            <person name="Huang Y."/>
            <person name="Kaminker J.S."/>
            <person name="Millburn G.H."/>
            <person name="Prochnik S.E."/>
            <person name="Smith C.D."/>
            <person name="Tupy J.L."/>
            <person name="Whitfield E.J."/>
            <person name="Bayraktaroglu L."/>
            <person name="Berman B.P."/>
            <person name="Bettencourt B.R."/>
            <person name="Celniker S.E."/>
            <person name="de Grey A.D.N.J."/>
            <person name="Drysdale R.A."/>
            <person name="Harris N.L."/>
            <person name="Richter J."/>
            <person name="Russo S."/>
            <person name="Schroeder A.J."/>
            <person name="Shu S.Q."/>
            <person name="Stapleton M."/>
            <person name="Yamada C."/>
            <person name="Ashburner M."/>
            <person name="Gelbart W.M."/>
            <person name="Rubin G.M."/>
            <person name="Lewis S.E."/>
        </authorList>
    </citation>
    <scope>GENOME REANNOTATION</scope>
    <source>
        <strain>Berkeley</strain>
    </source>
</reference>
<reference key="3">
    <citation type="submission" date="2003-01" db="EMBL/GenBank/DDBJ databases">
        <authorList>
            <person name="Stapleton M."/>
            <person name="Brokstein P."/>
            <person name="Hong L."/>
            <person name="Agbayani A."/>
            <person name="Carlson J.W."/>
            <person name="Champe M."/>
            <person name="Chavez C."/>
            <person name="Dorsett V."/>
            <person name="Dresnek D."/>
            <person name="Farfan D."/>
            <person name="Frise E."/>
            <person name="George R.A."/>
            <person name="Gonzalez M."/>
            <person name="Guarin H."/>
            <person name="Kronmiller B."/>
            <person name="Li P.W."/>
            <person name="Liao G."/>
            <person name="Miranda A."/>
            <person name="Mungall C.J."/>
            <person name="Nunoo J."/>
            <person name="Pacleb J.M."/>
            <person name="Paragas V."/>
            <person name="Park S."/>
            <person name="Patel S."/>
            <person name="Phouanenavong S."/>
            <person name="Wan K.H."/>
            <person name="Yu C."/>
            <person name="Lewis S.E."/>
            <person name="Rubin G.M."/>
            <person name="Celniker S.E."/>
        </authorList>
    </citation>
    <scope>NUCLEOTIDE SEQUENCE [LARGE SCALE MRNA]</scope>
    <source>
        <strain>Berkeley</strain>
        <tissue>Embryo</tissue>
    </source>
</reference>
<sequence>MSLLGRIAEKTSRLSCLRLMSVYPTHYVEPIVQKYKQLEQKNDLSKLYHVPIKAAVNKSSDTIFHDDTKHKMINYITKKGNSALARTLLSKTLELIKRTQTEHMNLAKGEKTTINTNPETLLKQAVENCRPLLQVTAIKRGGVTYQVPVPITTKRSYFLAMKWLLEAAREKERKVSLPEKLAWEILDAAHGQGRVIKRKDDLHRLCESNRAYAHYRWS</sequence>